<keyword id="KW-0963">Cytoplasm</keyword>
<keyword id="KW-0448">Lipopolysaccharide biosynthesis</keyword>
<keyword id="KW-1185">Reference proteome</keyword>
<keyword id="KW-0808">Transferase</keyword>
<feature type="chain" id="PRO_0000304498" description="2-dehydro-3-deoxyphosphooctonate aldolase">
    <location>
        <begin position="1"/>
        <end position="283"/>
    </location>
</feature>
<evidence type="ECO:0000255" key="1">
    <source>
        <dbReference type="HAMAP-Rule" id="MF_00056"/>
    </source>
</evidence>
<reference key="1">
    <citation type="submission" date="2006-05" db="EMBL/GenBank/DDBJ databases">
        <authorList>
            <consortium name="Genoscope"/>
        </authorList>
    </citation>
    <scope>NUCLEOTIDE SEQUENCE [LARGE SCALE GENOMIC DNA]</scope>
    <source>
        <strain>WH7803</strain>
    </source>
</reference>
<sequence length="283" mass="30122">MAARQVSLGSITFANDAPFVLIGGVNVLESQQFALDAAAVYADVCRRLSIPLVFKASFDKANRSSIHSFRGPGLSDGLAMLQAVKDTHGIPVITDVHTPEQAAPAAEVCDIIQLPAFLARQTDLVQAMAGTGAVINIKKPQFLSPSQMANVVEKFRECGNEQLLICERGSNFGYDNLVVDMLGFGVMKRCCDDLPLIFDVTHALQCRDPGGAASGGRRSQVLDLARAGMAVGLAGLFLEAHPDPSQARCDGPSALPLHQLEPFLSQLKAVDDLVKSLPALTIQ</sequence>
<comment type="catalytic activity">
    <reaction evidence="1">
        <text>D-arabinose 5-phosphate + phosphoenolpyruvate + H2O = 3-deoxy-alpha-D-manno-2-octulosonate-8-phosphate + phosphate</text>
        <dbReference type="Rhea" id="RHEA:14053"/>
        <dbReference type="ChEBI" id="CHEBI:15377"/>
        <dbReference type="ChEBI" id="CHEBI:43474"/>
        <dbReference type="ChEBI" id="CHEBI:57693"/>
        <dbReference type="ChEBI" id="CHEBI:58702"/>
        <dbReference type="ChEBI" id="CHEBI:85985"/>
        <dbReference type="EC" id="2.5.1.55"/>
    </reaction>
</comment>
<comment type="pathway">
    <text evidence="1">Carbohydrate biosynthesis; 3-deoxy-D-manno-octulosonate biosynthesis; 3-deoxy-D-manno-octulosonate from D-ribulose 5-phosphate: step 2/3.</text>
</comment>
<comment type="pathway">
    <text evidence="1">Bacterial outer membrane biogenesis; lipopolysaccharide biosynthesis.</text>
</comment>
<comment type="subcellular location">
    <subcellularLocation>
        <location evidence="1">Cytoplasm</location>
    </subcellularLocation>
</comment>
<comment type="similarity">
    <text evidence="1">Belongs to the KdsA family.</text>
</comment>
<proteinExistence type="inferred from homology"/>
<accession>A5GI92</accession>
<gene>
    <name evidence="1" type="primary">kdsA</name>
    <name type="ordered locus">SynWH7803_0231</name>
</gene>
<organism>
    <name type="scientific">Synechococcus sp. (strain WH7803)</name>
    <dbReference type="NCBI Taxonomy" id="32051"/>
    <lineage>
        <taxon>Bacteria</taxon>
        <taxon>Bacillati</taxon>
        <taxon>Cyanobacteriota</taxon>
        <taxon>Cyanophyceae</taxon>
        <taxon>Synechococcales</taxon>
        <taxon>Synechococcaceae</taxon>
        <taxon>Synechococcus</taxon>
    </lineage>
</organism>
<protein>
    <recommendedName>
        <fullName evidence="1">2-dehydro-3-deoxyphosphooctonate aldolase</fullName>
        <ecNumber evidence="1">2.5.1.55</ecNumber>
    </recommendedName>
    <alternativeName>
        <fullName evidence="1">3-deoxy-D-manno-octulosonic acid 8-phosphate synthase</fullName>
    </alternativeName>
    <alternativeName>
        <fullName evidence="1">KDO-8-phosphate synthase</fullName>
        <shortName evidence="1">KDO 8-P synthase</shortName>
        <shortName evidence="1">KDOPS</shortName>
    </alternativeName>
    <alternativeName>
        <fullName evidence="1">Phospho-2-dehydro-3-deoxyoctonate aldolase</fullName>
    </alternativeName>
</protein>
<name>KDSA_SYNPW</name>
<dbReference type="EC" id="2.5.1.55" evidence="1"/>
<dbReference type="EMBL" id="CT971583">
    <property type="protein sequence ID" value="CAK22657.1"/>
    <property type="molecule type" value="Genomic_DNA"/>
</dbReference>
<dbReference type="SMR" id="A5GI92"/>
<dbReference type="STRING" id="32051.SynWH7803_0231"/>
<dbReference type="KEGG" id="syx:SynWH7803_0231"/>
<dbReference type="eggNOG" id="COG2877">
    <property type="taxonomic scope" value="Bacteria"/>
</dbReference>
<dbReference type="HOGENOM" id="CLU_036666_0_0_3"/>
<dbReference type="OrthoDB" id="9780456at2"/>
<dbReference type="UniPathway" id="UPA00030"/>
<dbReference type="UniPathway" id="UPA00357">
    <property type="reaction ID" value="UER00474"/>
</dbReference>
<dbReference type="Proteomes" id="UP000001566">
    <property type="component" value="Chromosome"/>
</dbReference>
<dbReference type="GO" id="GO:0005737">
    <property type="term" value="C:cytoplasm"/>
    <property type="evidence" value="ECO:0007669"/>
    <property type="project" value="UniProtKB-SubCell"/>
</dbReference>
<dbReference type="GO" id="GO:0008676">
    <property type="term" value="F:3-deoxy-8-phosphooctulonate synthase activity"/>
    <property type="evidence" value="ECO:0007669"/>
    <property type="project" value="UniProtKB-UniRule"/>
</dbReference>
<dbReference type="GO" id="GO:0019294">
    <property type="term" value="P:keto-3-deoxy-D-manno-octulosonic acid biosynthetic process"/>
    <property type="evidence" value="ECO:0007669"/>
    <property type="project" value="UniProtKB-UniRule"/>
</dbReference>
<dbReference type="Gene3D" id="3.20.20.70">
    <property type="entry name" value="Aldolase class I"/>
    <property type="match status" value="1"/>
</dbReference>
<dbReference type="HAMAP" id="MF_00056">
    <property type="entry name" value="KDO8P_synth"/>
    <property type="match status" value="1"/>
</dbReference>
<dbReference type="InterPro" id="IPR013785">
    <property type="entry name" value="Aldolase_TIM"/>
</dbReference>
<dbReference type="InterPro" id="IPR006218">
    <property type="entry name" value="DAHP1/KDSA"/>
</dbReference>
<dbReference type="InterPro" id="IPR006269">
    <property type="entry name" value="KDO8P_synthase"/>
</dbReference>
<dbReference type="NCBIfam" id="TIGR01362">
    <property type="entry name" value="KDO8P_synth"/>
    <property type="match status" value="1"/>
</dbReference>
<dbReference type="NCBIfam" id="NF003543">
    <property type="entry name" value="PRK05198.1"/>
    <property type="match status" value="1"/>
</dbReference>
<dbReference type="NCBIfam" id="NF009109">
    <property type="entry name" value="PRK12457.1"/>
    <property type="match status" value="1"/>
</dbReference>
<dbReference type="PANTHER" id="PTHR21057">
    <property type="entry name" value="PHOSPHO-2-DEHYDRO-3-DEOXYHEPTONATE ALDOLASE"/>
    <property type="match status" value="1"/>
</dbReference>
<dbReference type="Pfam" id="PF00793">
    <property type="entry name" value="DAHP_synth_1"/>
    <property type="match status" value="1"/>
</dbReference>
<dbReference type="SUPFAM" id="SSF51569">
    <property type="entry name" value="Aldolase"/>
    <property type="match status" value="1"/>
</dbReference>